<proteinExistence type="evidence at protein level"/>
<comment type="function">
    <text evidence="6">Acts with TAL1/SCL to regulate red blood cell development. Also acts with LDB1 to maintain erythroid precursors in an immature state.</text>
</comment>
<comment type="subunit">
    <text evidence="1 3 5 6">Interacts with BEX2 and KDM5A (By similarity). Interacts via its LIM domains with ELF2 and LDB1. Also interacts with basic helix-loop-helix protein TAL1/SCL and can assemble in a complex with LMO2 and TAL1/SCL.</text>
</comment>
<comment type="interaction">
    <interactant intactId="EBI-3903256">
        <id>P25801</id>
    </interactant>
    <interactant intactId="EBI-3903251">
        <id>P17679</id>
        <label>Gata1</label>
    </interactant>
    <organismsDiffer>false</organismsDiffer>
    <experiments>5</experiments>
</comment>
<comment type="interaction">
    <interactant intactId="EBI-3903256">
        <id>P25801</id>
    </interactant>
    <interactant intactId="EBI-8006437">
        <id>P22091</id>
        <label>Tal1</label>
    </interactant>
    <organismsDiffer>false</organismsDiffer>
    <experiments>2</experiments>
</comment>
<comment type="interaction">
    <interactant intactId="EBI-3903256">
        <id>P25801</id>
    </interactant>
    <interactant intactId="EBI-2806671">
        <id>P23769</id>
        <label>GATA2</label>
    </interactant>
    <organismsDiffer>true</organismsDiffer>
    <experiments>3</experiments>
</comment>
<comment type="interaction">
    <interactant intactId="EBI-3903256">
        <id>P25801</id>
    </interactant>
    <interactant intactId="EBI-1753878">
        <id>P17542</id>
        <label>TAL1</label>
    </interactant>
    <organismsDiffer>true</organismsDiffer>
    <experiments>5</experiments>
</comment>
<comment type="subcellular location">
    <subcellularLocation>
        <location evidence="6">Nucleus</location>
    </subcellularLocation>
</comment>
<comment type="tissue specificity">
    <text evidence="4">Expressed in early mouse development in central nervous system, lung, kidney, liver and spleen but only very low levels occur in thymus.</text>
</comment>
<comment type="domain">
    <text evidence="1">The second LIM zinc-binding domain interacts with KDM5A.</text>
</comment>
<name>RBTN2_MOUSE</name>
<keyword id="KW-0002">3D-structure</keyword>
<keyword id="KW-0440">LIM domain</keyword>
<keyword id="KW-0479">Metal-binding</keyword>
<keyword id="KW-0539">Nucleus</keyword>
<keyword id="KW-1185">Reference proteome</keyword>
<keyword id="KW-0677">Repeat</keyword>
<keyword id="KW-0862">Zinc</keyword>
<organism>
    <name type="scientific">Mus musculus</name>
    <name type="common">Mouse</name>
    <dbReference type="NCBI Taxonomy" id="10090"/>
    <lineage>
        <taxon>Eukaryota</taxon>
        <taxon>Metazoa</taxon>
        <taxon>Chordata</taxon>
        <taxon>Craniata</taxon>
        <taxon>Vertebrata</taxon>
        <taxon>Euteleostomi</taxon>
        <taxon>Mammalia</taxon>
        <taxon>Eutheria</taxon>
        <taxon>Euarchontoglires</taxon>
        <taxon>Glires</taxon>
        <taxon>Rodentia</taxon>
        <taxon>Myomorpha</taxon>
        <taxon>Muroidea</taxon>
        <taxon>Muridae</taxon>
        <taxon>Murinae</taxon>
        <taxon>Mus</taxon>
        <taxon>Mus</taxon>
    </lineage>
</organism>
<feature type="chain" id="PRO_0000075897" description="Rhombotin-2">
    <location>
        <begin position="1"/>
        <end position="158"/>
    </location>
</feature>
<feature type="domain" description="LIM zinc-binding 1" evidence="2">
    <location>
        <begin position="30"/>
        <end position="89"/>
    </location>
</feature>
<feature type="domain" description="LIM zinc-binding 2" evidence="2">
    <location>
        <begin position="94"/>
        <end position="153"/>
    </location>
</feature>
<feature type="strand" evidence="7">
    <location>
        <begin position="30"/>
        <end position="33"/>
    </location>
</feature>
<feature type="strand" evidence="7">
    <location>
        <begin position="39"/>
        <end position="44"/>
    </location>
</feature>
<feature type="strand" evidence="7">
    <location>
        <begin position="46"/>
        <end position="50"/>
    </location>
</feature>
<feature type="turn" evidence="7">
    <location>
        <begin position="52"/>
        <end position="54"/>
    </location>
</feature>
<feature type="strand" evidence="7">
    <location>
        <begin position="58"/>
        <end position="60"/>
    </location>
</feature>
<feature type="strand" evidence="7">
    <location>
        <begin position="67"/>
        <end position="69"/>
    </location>
</feature>
<feature type="helix" evidence="7">
    <location>
        <begin position="81"/>
        <end position="87"/>
    </location>
</feature>
<feature type="strand" evidence="8">
    <location>
        <begin position="95"/>
        <end position="98"/>
    </location>
</feature>
<feature type="turn" evidence="8">
    <location>
        <begin position="117"/>
        <end position="119"/>
    </location>
</feature>
<feature type="strand" evidence="8">
    <location>
        <begin position="122"/>
        <end position="125"/>
    </location>
</feature>
<feature type="strand" evidence="8">
    <location>
        <begin position="133"/>
        <end position="137"/>
    </location>
</feature>
<feature type="strand" evidence="8">
    <location>
        <begin position="139"/>
        <end position="143"/>
    </location>
</feature>
<feature type="strand" evidence="8">
    <location>
        <begin position="145"/>
        <end position="147"/>
    </location>
</feature>
<feature type="helix" evidence="8">
    <location>
        <begin position="148"/>
        <end position="155"/>
    </location>
</feature>
<dbReference type="EMBL" id="M64360">
    <property type="protein sequence ID" value="AAA40054.1"/>
    <property type="molecule type" value="mRNA"/>
</dbReference>
<dbReference type="EMBL" id="BC057880">
    <property type="protein sequence ID" value="AAH57880.1"/>
    <property type="molecule type" value="mRNA"/>
</dbReference>
<dbReference type="CCDS" id="CCDS50652.1"/>
<dbReference type="PIR" id="A39370">
    <property type="entry name" value="A39370"/>
</dbReference>
<dbReference type="RefSeq" id="NP_001135808.1">
    <property type="nucleotide sequence ID" value="NM_001142336.1"/>
</dbReference>
<dbReference type="RefSeq" id="NP_001135809.1">
    <property type="nucleotide sequence ID" value="NM_001142337.2"/>
</dbReference>
<dbReference type="RefSeq" id="NP_001407305.1">
    <property type="nucleotide sequence ID" value="NM_001420376.1"/>
</dbReference>
<dbReference type="RefSeq" id="NP_001407306.1">
    <property type="nucleotide sequence ID" value="NM_001420377.1"/>
</dbReference>
<dbReference type="RefSeq" id="NP_001407307.1">
    <property type="nucleotide sequence ID" value="NM_001420378.1"/>
</dbReference>
<dbReference type="RefSeq" id="NP_001407308.1">
    <property type="nucleotide sequence ID" value="NM_001420379.1"/>
</dbReference>
<dbReference type="RefSeq" id="XP_006498883.1">
    <property type="nucleotide sequence ID" value="XM_006498820.4"/>
</dbReference>
<dbReference type="PDB" id="1J2O">
    <property type="method" value="NMR"/>
    <property type="chains" value="A=26-87"/>
</dbReference>
<dbReference type="PDB" id="2L6Y">
    <property type="method" value="NMR"/>
    <property type="chains" value="B=84-156"/>
</dbReference>
<dbReference type="PDB" id="2L6Z">
    <property type="method" value="NMR"/>
    <property type="chains" value="C=84-156"/>
</dbReference>
<dbReference type="PDB" id="2LXD">
    <property type="method" value="NMR"/>
    <property type="chains" value="A=84-156"/>
</dbReference>
<dbReference type="PDBsum" id="1J2O"/>
<dbReference type="PDBsum" id="2L6Y"/>
<dbReference type="PDBsum" id="2L6Z"/>
<dbReference type="PDBsum" id="2LXD"/>
<dbReference type="BMRB" id="P25801"/>
<dbReference type="SMR" id="P25801"/>
<dbReference type="BioGRID" id="201179">
    <property type="interactions" value="59"/>
</dbReference>
<dbReference type="CORUM" id="P25801"/>
<dbReference type="DIP" id="DIP-24247N"/>
<dbReference type="FunCoup" id="P25801">
    <property type="interactions" value="322"/>
</dbReference>
<dbReference type="IntAct" id="P25801">
    <property type="interactions" value="7"/>
</dbReference>
<dbReference type="MINT" id="P25801"/>
<dbReference type="STRING" id="10090.ENSMUSP00000106770"/>
<dbReference type="PhosphoSitePlus" id="P25801"/>
<dbReference type="PaxDb" id="10090-ENSMUSP00000106770"/>
<dbReference type="ProteomicsDB" id="254902"/>
<dbReference type="Antibodypedia" id="4265">
    <property type="antibodies" value="782 antibodies from 42 providers"/>
</dbReference>
<dbReference type="DNASU" id="16909"/>
<dbReference type="Ensembl" id="ENSMUST00000123437.8">
    <property type="protein sequence ID" value="ENSMUSP00000117703.2"/>
    <property type="gene ID" value="ENSMUSG00000032698.16"/>
</dbReference>
<dbReference type="Ensembl" id="ENSMUST00000170926.8">
    <property type="protein sequence ID" value="ENSMUSP00000128317.2"/>
    <property type="gene ID" value="ENSMUSG00000032698.16"/>
</dbReference>
<dbReference type="GeneID" id="16909"/>
<dbReference type="KEGG" id="mmu:16909"/>
<dbReference type="UCSC" id="uc012caj.1">
    <property type="organism name" value="mouse"/>
</dbReference>
<dbReference type="AGR" id="MGI:102811"/>
<dbReference type="CTD" id="4005"/>
<dbReference type="MGI" id="MGI:102811">
    <property type="gene designation" value="Lmo2"/>
</dbReference>
<dbReference type="VEuPathDB" id="HostDB:ENSMUSG00000032698"/>
<dbReference type="eggNOG" id="KOG0490">
    <property type="taxonomic scope" value="Eukaryota"/>
</dbReference>
<dbReference type="GeneTree" id="ENSGT00940000160199"/>
<dbReference type="InParanoid" id="P25801"/>
<dbReference type="OMA" id="MCGGCQQ"/>
<dbReference type="OrthoDB" id="6352355at2759"/>
<dbReference type="Reactome" id="R-MMU-8939236">
    <property type="pathway name" value="RUNX1 regulates transcription of genes involved in differentiation of HSCs"/>
</dbReference>
<dbReference type="BioGRID-ORCS" id="16909">
    <property type="hits" value="7 hits in 79 CRISPR screens"/>
</dbReference>
<dbReference type="ChiTaRS" id="Lmo2">
    <property type="organism name" value="mouse"/>
</dbReference>
<dbReference type="PRO" id="PR:P25801"/>
<dbReference type="Proteomes" id="UP000000589">
    <property type="component" value="Chromosome 2"/>
</dbReference>
<dbReference type="RNAct" id="P25801">
    <property type="molecule type" value="protein"/>
</dbReference>
<dbReference type="Bgee" id="ENSMUSG00000032698">
    <property type="expression patterns" value="Expressed in fetal liver hematopoietic progenitor cell and 280 other cell types or tissues"/>
</dbReference>
<dbReference type="ExpressionAtlas" id="P25801">
    <property type="expression patterns" value="baseline and differential"/>
</dbReference>
<dbReference type="GO" id="GO:0005634">
    <property type="term" value="C:nucleus"/>
    <property type="evidence" value="ECO:0000314"/>
    <property type="project" value="UniProtKB"/>
</dbReference>
<dbReference type="GO" id="GO:0032991">
    <property type="term" value="C:protein-containing complex"/>
    <property type="evidence" value="ECO:0000353"/>
    <property type="project" value="UniProtKB"/>
</dbReference>
<dbReference type="GO" id="GO:0003682">
    <property type="term" value="F:chromatin binding"/>
    <property type="evidence" value="ECO:0000314"/>
    <property type="project" value="MGI"/>
</dbReference>
<dbReference type="GO" id="GO:0046872">
    <property type="term" value="F:metal ion binding"/>
    <property type="evidence" value="ECO:0007669"/>
    <property type="project" value="UniProtKB-KW"/>
</dbReference>
<dbReference type="GO" id="GO:0035162">
    <property type="term" value="P:embryonic hemopoiesis"/>
    <property type="evidence" value="ECO:0000316"/>
    <property type="project" value="MGI"/>
</dbReference>
<dbReference type="GO" id="GO:0045647">
    <property type="term" value="P:negative regulation of erythrocyte differentiation"/>
    <property type="evidence" value="ECO:0000315"/>
    <property type="project" value="UniProtKB"/>
</dbReference>
<dbReference type="GO" id="GO:0045944">
    <property type="term" value="P:positive regulation of transcription by RNA polymerase II"/>
    <property type="evidence" value="ECO:0000316"/>
    <property type="project" value="MGI"/>
</dbReference>
<dbReference type="CDD" id="cd09384">
    <property type="entry name" value="LIM1_LMO2"/>
    <property type="match status" value="1"/>
</dbReference>
<dbReference type="CDD" id="cd09385">
    <property type="entry name" value="LIM2_LMO2"/>
    <property type="match status" value="1"/>
</dbReference>
<dbReference type="FunFam" id="2.10.110.10:FF:000059">
    <property type="entry name" value="LIM domain only 2"/>
    <property type="match status" value="1"/>
</dbReference>
<dbReference type="FunFam" id="2.10.110.10:FF:000016">
    <property type="entry name" value="LIM domain only 3"/>
    <property type="match status" value="1"/>
</dbReference>
<dbReference type="Gene3D" id="2.10.110.10">
    <property type="entry name" value="Cysteine Rich Protein"/>
    <property type="match status" value="2"/>
</dbReference>
<dbReference type="IDEAL" id="IID50043"/>
<dbReference type="InterPro" id="IPR050945">
    <property type="entry name" value="LMO_RBTN_TF"/>
</dbReference>
<dbReference type="InterPro" id="IPR001781">
    <property type="entry name" value="Znf_LIM"/>
</dbReference>
<dbReference type="PANTHER" id="PTHR45787">
    <property type="entry name" value="LD11652P"/>
    <property type="match status" value="1"/>
</dbReference>
<dbReference type="PANTHER" id="PTHR45787:SF3">
    <property type="entry name" value="RHOMBOTIN-2"/>
    <property type="match status" value="1"/>
</dbReference>
<dbReference type="Pfam" id="PF00412">
    <property type="entry name" value="LIM"/>
    <property type="match status" value="2"/>
</dbReference>
<dbReference type="SMART" id="SM00132">
    <property type="entry name" value="LIM"/>
    <property type="match status" value="2"/>
</dbReference>
<dbReference type="SUPFAM" id="SSF57716">
    <property type="entry name" value="Glucocorticoid receptor-like (DNA-binding domain)"/>
    <property type="match status" value="2"/>
</dbReference>
<dbReference type="PROSITE" id="PS00478">
    <property type="entry name" value="LIM_DOMAIN_1"/>
    <property type="match status" value="2"/>
</dbReference>
<dbReference type="PROSITE" id="PS50023">
    <property type="entry name" value="LIM_DOMAIN_2"/>
    <property type="match status" value="2"/>
</dbReference>
<protein>
    <recommendedName>
        <fullName>Rhombotin-2</fullName>
    </recommendedName>
    <alternativeName>
        <fullName>Cysteine-rich protein TTG-2</fullName>
    </alternativeName>
    <alternativeName>
        <fullName>LIM domain only protein 2</fullName>
        <shortName>LMO-2</shortName>
    </alternativeName>
    <alternativeName>
        <fullName>T-cell translocation protein 2</fullName>
    </alternativeName>
</protein>
<sequence>MSSAIERKSLDPSEEPVDEVLQIPPSLLTCGGCQQNIGDRYFLKAIDQYWHEDCLSCDLCGCRLGEVGRRLYYKLGRKLCRRDYLRLFGQDGLCASCDKRIRAYEMTMRVKDKVYHLECFKCAACQKHFCVGDRYLLINSDIVCEQDIYEWTKINGII</sequence>
<evidence type="ECO:0000250" key="1"/>
<evidence type="ECO:0000255" key="2">
    <source>
        <dbReference type="PROSITE-ProRule" id="PRU00125"/>
    </source>
</evidence>
<evidence type="ECO:0000269" key="3">
    <source>
    </source>
</evidence>
<evidence type="ECO:0000269" key="4">
    <source>
    </source>
</evidence>
<evidence type="ECO:0000269" key="5">
    <source>
    </source>
</evidence>
<evidence type="ECO:0000269" key="6">
    <source>
    </source>
</evidence>
<evidence type="ECO:0007829" key="7">
    <source>
        <dbReference type="PDB" id="1J2O"/>
    </source>
</evidence>
<evidence type="ECO:0007829" key="8">
    <source>
        <dbReference type="PDB" id="2L6Y"/>
    </source>
</evidence>
<reference key="1">
    <citation type="journal article" date="1991" name="Proc. Natl. Acad. Sci. U.S.A.">
        <title>The rhombotin family of cysteine-rich LIM-domain oncogenes: distinct members are involved in T-cell translocations to human chromosomes 11p15 and 11p13.</title>
        <authorList>
            <person name="Boehm T."/>
            <person name="Foroni L."/>
            <person name="Kaneko Y."/>
            <person name="Perutz M.F."/>
            <person name="Rabbitts T.H."/>
        </authorList>
    </citation>
    <scope>NUCLEOTIDE SEQUENCE [MRNA]</scope>
    <scope>TISSUE SPECIFICITY</scope>
    <source>
        <strain>BALB/cJ</strain>
        <tissue>Embryo</tissue>
    </source>
</reference>
<reference key="2">
    <citation type="journal article" date="2004" name="Genome Res.">
        <title>The status, quality, and expansion of the NIH full-length cDNA project: the Mammalian Gene Collection (MGC).</title>
        <authorList>
            <consortium name="The MGC Project Team"/>
        </authorList>
    </citation>
    <scope>NUCLEOTIDE SEQUENCE [LARGE SCALE MRNA]</scope>
    <source>
        <strain>NMRI</strain>
        <tissue>Mammary gland</tissue>
    </source>
</reference>
<reference key="3">
    <citation type="journal article" date="1997" name="Leukemia">
        <title>Elf-2, a rhombotin-2 binding ets transcription factor: discovery and potential role in T cell leukemia.</title>
        <authorList>
            <person name="Wilkinson D.A."/>
            <person name="Neale G.A.M."/>
            <person name="Mao S."/>
            <person name="Naeve C.W."/>
            <person name="Goorha R.M."/>
        </authorList>
    </citation>
    <scope>INTERACTION WITH ELF2</scope>
</reference>
<reference key="4">
    <citation type="journal article" date="1997" name="Proc. Natl. Acad. Sci. U.S.A.">
        <title>The LIM-domain binding protein Ldb1 and its partner LMO2 act as negative regulators of erythroid differentiation.</title>
        <authorList>
            <person name="Visvader J.E."/>
            <person name="Mao X."/>
            <person name="Fujiwara Y."/>
            <person name="Hahm K."/>
            <person name="Orkin S.H."/>
        </authorList>
    </citation>
    <scope>FUNCTION</scope>
    <scope>SUBCELLULAR LOCATION</scope>
    <scope>INTERACTION WITH LDB1 AND TAL1</scope>
    <scope>IDENTIFICATION IN A COMPLEX WITH LDB1 AND TAL1</scope>
</reference>
<reference key="5">
    <citation type="journal article" date="2003" name="EMBO J.">
        <title>Structural basis for the recognition of ldb1 by the N-terminal LIM domains of LMO2 and LMO4.</title>
        <authorList>
            <person name="Deane J.E."/>
            <person name="Mackay J.P."/>
            <person name="Kwan A.H.Y."/>
            <person name="Sum E.Y.M."/>
            <person name="Visvader J.E."/>
            <person name="Matthews J.M."/>
        </authorList>
    </citation>
    <scope>STRUCTURE BY NMR OF 26-87 IN COMPLEX WITH LDB1</scope>
</reference>
<gene>
    <name type="primary">Lmo2</name>
    <name type="synonym">Rbtn-2</name>
    <name type="synonym">Rbtn2</name>
    <name type="synonym">Rhom-2</name>
</gene>
<accession>P25801</accession>